<keyword id="KW-0106">Calcium</keyword>
<keyword id="KW-0225">Disease variant</keyword>
<keyword id="KW-0325">Glycoprotein</keyword>
<keyword id="KW-0378">Hydrolase</keyword>
<keyword id="KW-0458">Lysosome</keyword>
<keyword id="KW-0479">Metal-binding</keyword>
<keyword id="KW-0510">Mucopolysaccharidosis</keyword>
<keyword id="KW-1267">Proteomics identification</keyword>
<keyword id="KW-1185">Reference proteome</keyword>
<keyword id="KW-0964">Secreted</keyword>
<keyword id="KW-0732">Signal</keyword>
<organism>
    <name type="scientific">Homo sapiens</name>
    <name type="common">Human</name>
    <dbReference type="NCBI Taxonomy" id="9606"/>
    <lineage>
        <taxon>Eukaryota</taxon>
        <taxon>Metazoa</taxon>
        <taxon>Chordata</taxon>
        <taxon>Craniata</taxon>
        <taxon>Vertebrata</taxon>
        <taxon>Euteleostomi</taxon>
        <taxon>Mammalia</taxon>
        <taxon>Eutheria</taxon>
        <taxon>Euarchontoglires</taxon>
        <taxon>Primates</taxon>
        <taxon>Haplorrhini</taxon>
        <taxon>Catarrhini</taxon>
        <taxon>Hominidae</taxon>
        <taxon>Homo</taxon>
    </lineage>
</organism>
<name>ARSK_HUMAN</name>
<reference key="1">
    <citation type="journal article" date="2005" name="Hum. Mol. Genet.">
        <title>Sulfatases and sulfatase modifying factors: an exclusive and promiscuous relationship.</title>
        <authorList>
            <person name="Sardiello M."/>
            <person name="Annunziata I."/>
            <person name="Roma G."/>
            <person name="Ballabio A."/>
        </authorList>
    </citation>
    <scope>NUCLEOTIDE SEQUENCE [MRNA]</scope>
</reference>
<reference key="2">
    <citation type="journal article" date="2006" name="Gene">
        <title>Molecular cloning and initial characterization of three novel human sulfatases.</title>
        <authorList>
            <person name="Obaya A.J."/>
        </authorList>
    </citation>
    <scope>NUCLEOTIDE SEQUENCE [MRNA]</scope>
</reference>
<reference key="3">
    <citation type="journal article" date="2003" name="Genome Res.">
        <title>The secreted protein discovery initiative (SPDI), a large-scale effort to identify novel human secreted and transmembrane proteins: a bioinformatics assessment.</title>
        <authorList>
            <person name="Clark H.F."/>
            <person name="Gurney A.L."/>
            <person name="Abaya E."/>
            <person name="Baker K."/>
            <person name="Baldwin D.T."/>
            <person name="Brush J."/>
            <person name="Chen J."/>
            <person name="Chow B."/>
            <person name="Chui C."/>
            <person name="Crowley C."/>
            <person name="Currell B."/>
            <person name="Deuel B."/>
            <person name="Dowd P."/>
            <person name="Eaton D."/>
            <person name="Foster J.S."/>
            <person name="Grimaldi C."/>
            <person name="Gu Q."/>
            <person name="Hass P.E."/>
            <person name="Heldens S."/>
            <person name="Huang A."/>
            <person name="Kim H.S."/>
            <person name="Klimowski L."/>
            <person name="Jin Y."/>
            <person name="Johnson S."/>
            <person name="Lee J."/>
            <person name="Lewis L."/>
            <person name="Liao D."/>
            <person name="Mark M.R."/>
            <person name="Robbie E."/>
            <person name="Sanchez C."/>
            <person name="Schoenfeld J."/>
            <person name="Seshagiri S."/>
            <person name="Simmons L."/>
            <person name="Singh J."/>
            <person name="Smith V."/>
            <person name="Stinson J."/>
            <person name="Vagts A."/>
            <person name="Vandlen R.L."/>
            <person name="Watanabe C."/>
            <person name="Wieand D."/>
            <person name="Woods K."/>
            <person name="Xie M.-H."/>
            <person name="Yansura D.G."/>
            <person name="Yi S."/>
            <person name="Yu G."/>
            <person name="Yuan J."/>
            <person name="Zhang M."/>
            <person name="Zhang Z."/>
            <person name="Goddard A.D."/>
            <person name="Wood W.I."/>
            <person name="Godowski P.J."/>
            <person name="Gray A.M."/>
        </authorList>
    </citation>
    <scope>NUCLEOTIDE SEQUENCE [LARGE SCALE MRNA]</scope>
</reference>
<reference key="4">
    <citation type="journal article" date="2004" name="Nat. Genet.">
        <title>Complete sequencing and characterization of 21,243 full-length human cDNAs.</title>
        <authorList>
            <person name="Ota T."/>
            <person name="Suzuki Y."/>
            <person name="Nishikawa T."/>
            <person name="Otsuki T."/>
            <person name="Sugiyama T."/>
            <person name="Irie R."/>
            <person name="Wakamatsu A."/>
            <person name="Hayashi K."/>
            <person name="Sato H."/>
            <person name="Nagai K."/>
            <person name="Kimura K."/>
            <person name="Makita H."/>
            <person name="Sekine M."/>
            <person name="Obayashi M."/>
            <person name="Nishi T."/>
            <person name="Shibahara T."/>
            <person name="Tanaka T."/>
            <person name="Ishii S."/>
            <person name="Yamamoto J."/>
            <person name="Saito K."/>
            <person name="Kawai Y."/>
            <person name="Isono Y."/>
            <person name="Nakamura Y."/>
            <person name="Nagahari K."/>
            <person name="Murakami K."/>
            <person name="Yasuda T."/>
            <person name="Iwayanagi T."/>
            <person name="Wagatsuma M."/>
            <person name="Shiratori A."/>
            <person name="Sudo H."/>
            <person name="Hosoiri T."/>
            <person name="Kaku Y."/>
            <person name="Kodaira H."/>
            <person name="Kondo H."/>
            <person name="Sugawara M."/>
            <person name="Takahashi M."/>
            <person name="Kanda K."/>
            <person name="Yokoi T."/>
            <person name="Furuya T."/>
            <person name="Kikkawa E."/>
            <person name="Omura Y."/>
            <person name="Abe K."/>
            <person name="Kamihara K."/>
            <person name="Katsuta N."/>
            <person name="Sato K."/>
            <person name="Tanikawa M."/>
            <person name="Yamazaki M."/>
            <person name="Ninomiya K."/>
            <person name="Ishibashi T."/>
            <person name="Yamashita H."/>
            <person name="Murakawa K."/>
            <person name="Fujimori K."/>
            <person name="Tanai H."/>
            <person name="Kimata M."/>
            <person name="Watanabe M."/>
            <person name="Hiraoka S."/>
            <person name="Chiba Y."/>
            <person name="Ishida S."/>
            <person name="Ono Y."/>
            <person name="Takiguchi S."/>
            <person name="Watanabe S."/>
            <person name="Yosida M."/>
            <person name="Hotuta T."/>
            <person name="Kusano J."/>
            <person name="Kanehori K."/>
            <person name="Takahashi-Fujii A."/>
            <person name="Hara H."/>
            <person name="Tanase T.-O."/>
            <person name="Nomura Y."/>
            <person name="Togiya S."/>
            <person name="Komai F."/>
            <person name="Hara R."/>
            <person name="Takeuchi K."/>
            <person name="Arita M."/>
            <person name="Imose N."/>
            <person name="Musashino K."/>
            <person name="Yuuki H."/>
            <person name="Oshima A."/>
            <person name="Sasaki N."/>
            <person name="Aotsuka S."/>
            <person name="Yoshikawa Y."/>
            <person name="Matsunawa H."/>
            <person name="Ichihara T."/>
            <person name="Shiohata N."/>
            <person name="Sano S."/>
            <person name="Moriya S."/>
            <person name="Momiyama H."/>
            <person name="Satoh N."/>
            <person name="Takami S."/>
            <person name="Terashima Y."/>
            <person name="Suzuki O."/>
            <person name="Nakagawa S."/>
            <person name="Senoh A."/>
            <person name="Mizoguchi H."/>
            <person name="Goto Y."/>
            <person name="Shimizu F."/>
            <person name="Wakebe H."/>
            <person name="Hishigaki H."/>
            <person name="Watanabe T."/>
            <person name="Sugiyama A."/>
            <person name="Takemoto M."/>
            <person name="Kawakami B."/>
            <person name="Yamazaki M."/>
            <person name="Watanabe K."/>
            <person name="Kumagai A."/>
            <person name="Itakura S."/>
            <person name="Fukuzumi Y."/>
            <person name="Fujimori Y."/>
            <person name="Komiyama M."/>
            <person name="Tashiro H."/>
            <person name="Tanigami A."/>
            <person name="Fujiwara T."/>
            <person name="Ono T."/>
            <person name="Yamada K."/>
            <person name="Fujii Y."/>
            <person name="Ozaki K."/>
            <person name="Hirao M."/>
            <person name="Ohmori Y."/>
            <person name="Kawabata A."/>
            <person name="Hikiji T."/>
            <person name="Kobatake N."/>
            <person name="Inagaki H."/>
            <person name="Ikema Y."/>
            <person name="Okamoto S."/>
            <person name="Okitani R."/>
            <person name="Kawakami T."/>
            <person name="Noguchi S."/>
            <person name="Itoh T."/>
            <person name="Shigeta K."/>
            <person name="Senba T."/>
            <person name="Matsumura K."/>
            <person name="Nakajima Y."/>
            <person name="Mizuno T."/>
            <person name="Morinaga M."/>
            <person name="Sasaki M."/>
            <person name="Togashi T."/>
            <person name="Oyama M."/>
            <person name="Hata H."/>
            <person name="Watanabe M."/>
            <person name="Komatsu T."/>
            <person name="Mizushima-Sugano J."/>
            <person name="Satoh T."/>
            <person name="Shirai Y."/>
            <person name="Takahashi Y."/>
            <person name="Nakagawa K."/>
            <person name="Okumura K."/>
            <person name="Nagase T."/>
            <person name="Nomura N."/>
            <person name="Kikuchi H."/>
            <person name="Masuho Y."/>
            <person name="Yamashita R."/>
            <person name="Nakai K."/>
            <person name="Yada T."/>
            <person name="Nakamura Y."/>
            <person name="Ohara O."/>
            <person name="Isogai T."/>
            <person name="Sugano S."/>
        </authorList>
    </citation>
    <scope>NUCLEOTIDE SEQUENCE [LARGE SCALE MRNA]</scope>
    <scope>VARIANT ARG-525</scope>
    <source>
        <tissue>Trachea</tissue>
    </source>
</reference>
<reference key="5">
    <citation type="journal article" date="2004" name="Genome Res.">
        <title>The status, quality, and expansion of the NIH full-length cDNA project: the Mammalian Gene Collection (MGC).</title>
        <authorList>
            <consortium name="The MGC Project Team"/>
        </authorList>
    </citation>
    <scope>NUCLEOTIDE SEQUENCE [LARGE SCALE MRNA]</scope>
    <source>
        <tissue>Brain</tissue>
        <tissue>Testis</tissue>
    </source>
</reference>
<reference key="6">
    <citation type="journal article" date="2007" name="BMC Genomics">
        <title>The full-ORF clone resource of the German cDNA consortium.</title>
        <authorList>
            <person name="Bechtel S."/>
            <person name="Rosenfelder H."/>
            <person name="Duda A."/>
            <person name="Schmidt C.P."/>
            <person name="Ernst U."/>
            <person name="Wellenreuther R."/>
            <person name="Mehrle A."/>
            <person name="Schuster C."/>
            <person name="Bahr A."/>
            <person name="Bloecker H."/>
            <person name="Heubner D."/>
            <person name="Hoerlein A."/>
            <person name="Michel G."/>
            <person name="Wedler H."/>
            <person name="Koehrer K."/>
            <person name="Ottenwaelder B."/>
            <person name="Poustka A."/>
            <person name="Wiemann S."/>
            <person name="Schupp I."/>
        </authorList>
    </citation>
    <scope>NUCLEOTIDE SEQUENCE [LARGE SCALE MRNA] OF 54-536</scope>
    <source>
        <tissue>Heart</tissue>
    </source>
</reference>
<reference key="7">
    <citation type="journal article" date="2009" name="Sci. Signal.">
        <title>Quantitative phosphoproteomic analysis of T cell receptor signaling reveals system-wide modulation of protein-protein interactions.</title>
        <authorList>
            <person name="Mayya V."/>
            <person name="Lundgren D.H."/>
            <person name="Hwang S.-I."/>
            <person name="Rezaul K."/>
            <person name="Wu L."/>
            <person name="Eng J.K."/>
            <person name="Rodionov V."/>
            <person name="Han D.K."/>
        </authorList>
    </citation>
    <scope>IDENTIFICATION BY MASS SPECTROMETRY [LARGE SCALE ANALYSIS]</scope>
    <source>
        <tissue>Leukemic T-cell</tissue>
    </source>
</reference>
<reference key="8">
    <citation type="journal article" date="2013" name="J. Biol. Chem.">
        <title>Arylsulfatase K, a novel lysosomal sulfatase.</title>
        <authorList>
            <person name="Wiegmann E.M."/>
            <person name="Westendorf E."/>
            <person name="Kalus I."/>
            <person name="Pringle T.H."/>
            <person name="Luebke T."/>
            <person name="Dierks T."/>
        </authorList>
    </citation>
    <scope>FUNCTION</scope>
    <scope>CATALYTIC ACTIVITY</scope>
    <scope>MUTAGENESIS OF CYS-80</scope>
    <scope>GLYCOSYLATION</scope>
    <scope>SUBCELLULAR LOCATION</scope>
    <scope>PROTEOLYTIC PROCESSING</scope>
    <scope>TISSUE SPECIFICITY</scope>
    <scope>BIOPHYSICOCHEMICAL PROPERTIES</scope>
    <scope>OXOALANINE AT CYS-80</scope>
</reference>
<reference key="9">
    <citation type="journal article" date="2017" name="ACS Chem. Biol.">
        <title>Arylsulfatase K is the Lysosomal 2-Sulfoglucuronate Sulfatase.</title>
        <authorList>
            <person name="Dhamale O.P."/>
            <person name="Lawrence R."/>
            <person name="Wiegmann E.M."/>
            <person name="Shah B.A."/>
            <person name="Al-Mafraji K."/>
            <person name="Lamanna W.C."/>
            <person name="Luebke T."/>
            <person name="Dierks T."/>
            <person name="Boons G.J."/>
            <person name="Esko J.D."/>
        </authorList>
    </citation>
    <scope>FUNCTION</scope>
    <scope>CATALYTIC ACTIVITY</scope>
    <scope>MUTAGENESIS OF CYS-80</scope>
</reference>
<reference key="10">
    <citation type="journal article" date="2022" name="J. Med. Genet.">
        <title>Novel subtype of mucopolysaccharidosis caused by arylsulfatase K (ARSK) deficiency.</title>
        <authorList>
            <person name="Verheyen S."/>
            <person name="Blatterer J."/>
            <person name="Speicher M.R."/>
            <person name="Bhavani G.S."/>
            <person name="Boons G.J."/>
            <person name="Ilse M.B."/>
            <person name="Andrae D."/>
            <person name="Spross J."/>
            <person name="Vaz F.M."/>
            <person name="Kircher S.G."/>
            <person name="Posch-Pertl L."/>
            <person name="Baumgartner D."/>
            <person name="Luebke T."/>
            <person name="Shah H."/>
            <person name="Al Kaissi A."/>
            <person name="Girisha K.M."/>
            <person name="Plecko B."/>
        </authorList>
    </citation>
    <scope>INVOLVEMENT IN MPS10</scope>
    <scope>VARIANTS MPS10 CYS-84 AND 187-LEU--VAL-536 DEL</scope>
    <scope>CHARACTERIZATION OF VARIANTS MPS10 CYS-84 AND 187-LEU--VAL-536 DEL</scope>
    <scope>FUNCTION</scope>
</reference>
<comment type="function">
    <text evidence="4 5 6">Catalyzes the hydrolysis of pseudosubstrates such as p-nitrocatechol sulfate and p-nitrophenyl sulfate (PubMed:23986440). Catalyzes the hydrolysis of the 2-sulfate groups of the 2-O-sulfo-D-glucuronate residues of chondroitin sulfate, heparin and heparitin sulfate (PubMed:28055182, PubMed:34916232). Acts selectively on 2-sulfoglucuronate and lacks activity against 2-sulfoiduronate (PubMed:28055182).</text>
</comment>
<comment type="catalytic activity">
    <reaction evidence="4">
        <text>an aryl sulfate + H2O = a phenol + sulfate + H(+)</text>
        <dbReference type="Rhea" id="RHEA:17261"/>
        <dbReference type="ChEBI" id="CHEBI:15377"/>
        <dbReference type="ChEBI" id="CHEBI:15378"/>
        <dbReference type="ChEBI" id="CHEBI:16189"/>
        <dbReference type="ChEBI" id="CHEBI:33853"/>
        <dbReference type="ChEBI" id="CHEBI:140317"/>
        <dbReference type="EC" id="3.1.6.1"/>
    </reaction>
</comment>
<comment type="catalytic activity">
    <reaction evidence="5">
        <text>Hydrolysis of the 2-sulfate groups of the 2-O-sulfo-D-glucuronate residues of chondroitin sulfate, heparin and heparitin sulfate.</text>
        <dbReference type="EC" id="3.1.6.18"/>
    </reaction>
</comment>
<comment type="cofactor">
    <cofactor evidence="1">
        <name>Ca(2+)</name>
        <dbReference type="ChEBI" id="CHEBI:29108"/>
    </cofactor>
    <text evidence="1">Binds 1 Ca(2+) ion per subunit.</text>
</comment>
<comment type="biophysicochemical properties">
    <kinetics>
        <KM evidence="4">10.9 mM for p-nitrocatechol sulfate</KM>
        <KM evidence="4">20.6 mM for p-nitrophenyl sulfate</KM>
        <Vmax evidence="4">0.84 umol/min/mg enzyme for p-nitrocatechol sulfate</Vmax>
        <Vmax evidence="4">0.93 umol/min/mg enzyme for p-nitrophenyl sulfate</Vmax>
    </kinetics>
    <phDependence>
        <text evidence="4">Optimum pH is 4.6.</text>
    </phDependence>
</comment>
<comment type="subcellular location">
    <subcellularLocation>
        <location evidence="4">Secreted</location>
    </subcellularLocation>
    <subcellularLocation>
        <location evidence="4">Lysosome</location>
    </subcellularLocation>
</comment>
<comment type="tissue specificity">
    <text evidence="4">Expressed at high levels in the placenta and pancreas (PubMed:23986440). Expressed at intermediate levels in the lung, brain, heart, liver and kidney and at low levels in the muscle (PubMed:23986440).</text>
</comment>
<comment type="PTM">
    <text evidence="4">The conversion to 3-oxoalanine (also known as C-formylglycine, FGly), of a serine or cysteine residue in prokaryotes and of a cysteine residue in eukaryotes, is critical for catalytic activity.</text>
</comment>
<comment type="PTM">
    <text evidence="4">The 75-kDa precursor undergoes proteolytic processing to yield a 23 kDa form.</text>
</comment>
<comment type="PTM">
    <text evidence="4">N-glycosylated with both high mannose and complex type sugars.</text>
</comment>
<comment type="disease" evidence="6">
    <disease id="DI-06314">
        <name>Mucopolysaccharidosis 10</name>
        <acronym>MPS10</acronym>
        <description>A form of mucopolysaccharidosis, a group of lysosomal storage diseases characterized by defective degradation of glycosaminoglycans, resulting in their excessive accumulation and secretion. The diseases are progressive and often display a wide spectrum of clinical severity. MPS10 is an autosomal recessive childhood-onset disorder. Clinical features include disproportionate short-trunk short stature and skeletal, cardiac, and ophthalmologic abnormalities.</description>
        <dbReference type="MIM" id="619698"/>
    </disease>
    <text>The disease is caused by variants affecting the gene represented in this entry.</text>
</comment>
<comment type="similarity">
    <text evidence="7">Belongs to the sulfatase family.</text>
</comment>
<comment type="sequence caution" evidence="7">
    <conflict type="erroneous initiation">
        <sequence resource="EMBL-CDS" id="AAH36047"/>
    </conflict>
    <text>Extended N-terminus.</text>
</comment>
<gene>
    <name type="primary">ARSK</name>
    <name type="synonym">TSULF</name>
    <name type="ORF">UNQ630/PRO1246</name>
</gene>
<evidence type="ECO:0000250" key="1">
    <source>
        <dbReference type="UniProtKB" id="P15289"/>
    </source>
</evidence>
<evidence type="ECO:0000255" key="2"/>
<evidence type="ECO:0000269" key="3">
    <source>
    </source>
</evidence>
<evidence type="ECO:0000269" key="4">
    <source>
    </source>
</evidence>
<evidence type="ECO:0000269" key="5">
    <source>
    </source>
</evidence>
<evidence type="ECO:0000269" key="6">
    <source>
    </source>
</evidence>
<evidence type="ECO:0000305" key="7"/>
<sequence>MLLLWVSVVAALALAVLAPGAGEQRRRAAKAPNVVLVVSDSFDGRLTFHPGSQVVKLPFINFMKTRGTSFLNAYTNSPICCPSRAAMWSGLFTHLTESWNNFKGLDPNYTTWMDVMERHGYRTQKFGKLDYTSGHHSISNRVEAWTRDVAFLLRQEGRPMVNLIRNRTKVRVMERDWQNTDKAVNWLRKEAINYTEPFVIYLGLNLPHPYPSPSSGENFGSSTFHTSLYWLEKVSHDAIKIPKWSPLSEMHPVDYYSSYTKNCTGRFTKKEIKNIRAFYYAMCAETDAMLGEIILALHQLDLLQKTIVIYSSDHGELAMEHRQFYKMSMYEASAHVPLLMMGPGIKAGLQVSNVVSLVDIYPTMLDIAGIPLPQNLSGYSLLPLSSETFKNEHKVKNLHPPWILSEFHGCNVNASTYMLRTNHWKYIAYSDGASILPQLFDLSSDPDELTNVAVKFPEITYSLDQKLHSIINYPKVSASVHQYNKEQFIKWKQSIGQNYSNVIANLRWHQDWQKEPRKYENAIDQWLKTHMNPRAV</sequence>
<proteinExistence type="evidence at protein level"/>
<protein>
    <recommendedName>
        <fullName>Arylsulfatase K</fullName>
        <shortName>ASK</shortName>
        <ecNumber evidence="4">3.1.6.1</ecNumber>
    </recommendedName>
    <alternativeName>
        <fullName>Glucuronate-2-sulfatase</fullName>
        <ecNumber evidence="5">3.1.6.18</ecNumber>
    </alternativeName>
    <alternativeName>
        <fullName>Telethon sulfatase</fullName>
    </alternativeName>
</protein>
<feature type="signal peptide" evidence="2">
    <location>
        <begin position="1"/>
        <end position="22"/>
    </location>
</feature>
<feature type="chain" id="PRO_0000042219" description="Arylsulfatase K">
    <location>
        <begin position="23"/>
        <end position="536"/>
    </location>
</feature>
<feature type="active site" description="Nucleophile" evidence="1">
    <location>
        <position position="80"/>
    </location>
</feature>
<feature type="binding site" evidence="1">
    <location>
        <position position="40"/>
    </location>
    <ligand>
        <name>Ca(2+)</name>
        <dbReference type="ChEBI" id="CHEBI:29108"/>
    </ligand>
</feature>
<feature type="binding site" description="via 3-oxoalanine" evidence="1">
    <location>
        <position position="80"/>
    </location>
    <ligand>
        <name>Ca(2+)</name>
        <dbReference type="ChEBI" id="CHEBI:29108"/>
    </ligand>
</feature>
<feature type="binding site" evidence="1">
    <location>
        <position position="128"/>
    </location>
    <ligand>
        <name>substrate</name>
    </ligand>
</feature>
<feature type="binding site" evidence="1">
    <location>
        <position position="251"/>
    </location>
    <ligand>
        <name>substrate</name>
    </ligand>
</feature>
<feature type="binding site" evidence="1">
    <location>
        <position position="313"/>
    </location>
    <ligand>
        <name>Ca(2+)</name>
        <dbReference type="ChEBI" id="CHEBI:29108"/>
    </ligand>
</feature>
<feature type="binding site" evidence="1">
    <location>
        <position position="314"/>
    </location>
    <ligand>
        <name>Ca(2+)</name>
        <dbReference type="ChEBI" id="CHEBI:29108"/>
    </ligand>
</feature>
<feature type="modified residue" description="3-oxoalanine (Cys)" evidence="4">
    <location>
        <position position="80"/>
    </location>
</feature>
<feature type="glycosylation site" description="N-linked (GlcNAc...) asparagine" evidence="2">
    <location>
        <position position="108"/>
    </location>
</feature>
<feature type="glycosylation site" description="N-linked (GlcNAc...) asparagine" evidence="2">
    <location>
        <position position="166"/>
    </location>
</feature>
<feature type="glycosylation site" description="N-linked (GlcNAc...) asparagine" evidence="2">
    <location>
        <position position="193"/>
    </location>
</feature>
<feature type="glycosylation site" description="N-linked (GlcNAc...) asparagine" evidence="2">
    <location>
        <position position="262"/>
    </location>
</feature>
<feature type="glycosylation site" description="N-linked (GlcNAc...) asparagine" evidence="2">
    <location>
        <position position="375"/>
    </location>
</feature>
<feature type="glycosylation site" description="N-linked (GlcNAc...) asparagine" evidence="2">
    <location>
        <position position="413"/>
    </location>
</feature>
<feature type="glycosylation site" description="N-linked (GlcNAc...) asparagine" evidence="2">
    <location>
        <position position="498"/>
    </location>
</feature>
<feature type="sequence variant" id="VAR_086963" description="In MPS10; no effect on protein abundance; decreased glucuronate-2-sulfatase activity; dbSNP:rs147168858." evidence="6">
    <original>R</original>
    <variation>C</variation>
    <location>
        <position position="84"/>
    </location>
</feature>
<feature type="sequence variant" id="VAR_086964" description="In MPS10; mutant protein is not detected by Western blot in transfected cells; severely decreased glucuronate-2-sulfatase activity." evidence="6">
    <location>
        <begin position="187"/>
        <end position="536"/>
    </location>
</feature>
<feature type="sequence variant" id="VAR_052516" description="In dbSNP:rs17084927." evidence="3">
    <original>Q</original>
    <variation>R</variation>
    <location>
        <position position="525"/>
    </location>
</feature>
<feature type="mutagenesis site" description="Loss of arylsulfatase and glucuronate-2-sulfatase activity." evidence="4 5">
    <original>C</original>
    <variation>A</variation>
    <location>
        <position position="80"/>
    </location>
</feature>
<feature type="sequence conflict" description="In Ref. 6; CAD38634." evidence="7" ref="6">
    <original>S</original>
    <variation>P</variation>
    <location>
        <position position="380"/>
    </location>
</feature>
<accession>Q6UWY0</accession>
<accession>A2BDE3</accession>
<accession>B4E1I4</accession>
<accession>Q3ZCW3</accession>
<accession>Q8N3Q8</accession>
<dbReference type="EC" id="3.1.6.1" evidence="4"/>
<dbReference type="EC" id="3.1.6.18" evidence="5"/>
<dbReference type="EMBL" id="AY875939">
    <property type="protein sequence ID" value="AAW66667.1"/>
    <property type="molecule type" value="mRNA"/>
</dbReference>
<dbReference type="EMBL" id="AY358596">
    <property type="protein sequence ID" value="AAQ88959.1"/>
    <property type="molecule type" value="mRNA"/>
</dbReference>
<dbReference type="EMBL" id="AK303855">
    <property type="protein sequence ID" value="BAG64796.1"/>
    <property type="molecule type" value="mRNA"/>
</dbReference>
<dbReference type="EMBL" id="BC036047">
    <property type="protein sequence ID" value="AAH36047.1"/>
    <property type="status" value="ALT_INIT"/>
    <property type="molecule type" value="mRNA"/>
</dbReference>
<dbReference type="EMBL" id="BC130329">
    <property type="protein sequence ID" value="AAI30330.1"/>
    <property type="molecule type" value="mRNA"/>
</dbReference>
<dbReference type="EMBL" id="AL832711">
    <property type="protein sequence ID" value="CAD38634.1"/>
    <property type="molecule type" value="mRNA"/>
</dbReference>
<dbReference type="CCDS" id="CCDS4073.1"/>
<dbReference type="RefSeq" id="NP_937793.1">
    <property type="nucleotide sequence ID" value="NM_198150.3"/>
</dbReference>
<dbReference type="SMR" id="Q6UWY0"/>
<dbReference type="BioGRID" id="127507">
    <property type="interactions" value="149"/>
</dbReference>
<dbReference type="FunCoup" id="Q6UWY0">
    <property type="interactions" value="640"/>
</dbReference>
<dbReference type="IntAct" id="Q6UWY0">
    <property type="interactions" value="82"/>
</dbReference>
<dbReference type="STRING" id="9606.ENSP00000369346"/>
<dbReference type="GlyCosmos" id="Q6UWY0">
    <property type="glycosylation" value="7 sites, No reported glycans"/>
</dbReference>
<dbReference type="GlyGen" id="Q6UWY0">
    <property type="glycosylation" value="7 sites, 3 N-linked glycans (3 sites)"/>
</dbReference>
<dbReference type="iPTMnet" id="Q6UWY0"/>
<dbReference type="PhosphoSitePlus" id="Q6UWY0"/>
<dbReference type="SwissPalm" id="Q6UWY0"/>
<dbReference type="BioMuta" id="ARSK"/>
<dbReference type="DMDM" id="74738157"/>
<dbReference type="jPOST" id="Q6UWY0"/>
<dbReference type="MassIVE" id="Q6UWY0"/>
<dbReference type="PaxDb" id="9606-ENSP00000369346"/>
<dbReference type="PeptideAtlas" id="Q6UWY0"/>
<dbReference type="ProteomicsDB" id="67536"/>
<dbReference type="Pumba" id="Q6UWY0"/>
<dbReference type="Antibodypedia" id="25008">
    <property type="antibodies" value="112 antibodies from 23 providers"/>
</dbReference>
<dbReference type="DNASU" id="153642"/>
<dbReference type="Ensembl" id="ENST00000380009.9">
    <property type="protein sequence ID" value="ENSP00000369346.4"/>
    <property type="gene ID" value="ENSG00000164291.17"/>
</dbReference>
<dbReference type="GeneID" id="153642"/>
<dbReference type="KEGG" id="hsa:153642"/>
<dbReference type="MANE-Select" id="ENST00000380009.9">
    <property type="protein sequence ID" value="ENSP00000369346.4"/>
    <property type="RefSeq nucleotide sequence ID" value="NM_198150.3"/>
    <property type="RefSeq protein sequence ID" value="NP_937793.1"/>
</dbReference>
<dbReference type="UCSC" id="uc003kld.4">
    <property type="organism name" value="human"/>
</dbReference>
<dbReference type="AGR" id="HGNC:25239"/>
<dbReference type="CTD" id="153642"/>
<dbReference type="DisGeNET" id="153642"/>
<dbReference type="GeneCards" id="ARSK"/>
<dbReference type="HGNC" id="HGNC:25239">
    <property type="gene designation" value="ARSK"/>
</dbReference>
<dbReference type="HPA" id="ENSG00000164291">
    <property type="expression patterns" value="Tissue enhanced (parathyroid)"/>
</dbReference>
<dbReference type="MalaCards" id="ARSK"/>
<dbReference type="MIM" id="610011">
    <property type="type" value="gene"/>
</dbReference>
<dbReference type="MIM" id="619698">
    <property type="type" value="phenotype"/>
</dbReference>
<dbReference type="neXtProt" id="NX_Q6UWY0"/>
<dbReference type="OpenTargets" id="ENSG00000164291"/>
<dbReference type="Orphanet" id="662216">
    <property type="disease" value="Mucopolysaccharidosis type 10"/>
</dbReference>
<dbReference type="PharmGKB" id="PA143485311"/>
<dbReference type="VEuPathDB" id="HostDB:ENSG00000164291"/>
<dbReference type="eggNOG" id="KOG3731">
    <property type="taxonomic scope" value="Eukaryota"/>
</dbReference>
<dbReference type="GeneTree" id="ENSGT00940000158982"/>
<dbReference type="HOGENOM" id="CLU_006332_6_0_1"/>
<dbReference type="InParanoid" id="Q6UWY0"/>
<dbReference type="OMA" id="RAYFGAC"/>
<dbReference type="OrthoDB" id="1886626at2759"/>
<dbReference type="PAN-GO" id="Q6UWY0">
    <property type="GO annotations" value="2 GO annotations based on evolutionary models"/>
</dbReference>
<dbReference type="PhylomeDB" id="Q6UWY0"/>
<dbReference type="TreeFam" id="TF313545"/>
<dbReference type="BRENDA" id="3.1.6.1">
    <property type="organism ID" value="2681"/>
</dbReference>
<dbReference type="BRENDA" id="3.1.6.18">
    <property type="organism ID" value="2681"/>
</dbReference>
<dbReference type="PathwayCommons" id="Q6UWY0"/>
<dbReference type="Reactome" id="R-HSA-1663150">
    <property type="pathway name" value="The activation of arylsulfatases"/>
</dbReference>
<dbReference type="Reactome" id="R-HSA-9840310">
    <property type="pathway name" value="Glycosphingolipid catabolism"/>
</dbReference>
<dbReference type="SignaLink" id="Q6UWY0"/>
<dbReference type="BioGRID-ORCS" id="153642">
    <property type="hits" value="14 hits in 1153 CRISPR screens"/>
</dbReference>
<dbReference type="ChiTaRS" id="ARSK">
    <property type="organism name" value="human"/>
</dbReference>
<dbReference type="GenomeRNAi" id="153642"/>
<dbReference type="Pharos" id="Q6UWY0">
    <property type="development level" value="Tbio"/>
</dbReference>
<dbReference type="PRO" id="PR:Q6UWY0"/>
<dbReference type="Proteomes" id="UP000005640">
    <property type="component" value="Chromosome 5"/>
</dbReference>
<dbReference type="RNAct" id="Q6UWY0">
    <property type="molecule type" value="protein"/>
</dbReference>
<dbReference type="Bgee" id="ENSG00000164291">
    <property type="expression patterns" value="Expressed in kidney epithelium and 185 other cell types or tissues"/>
</dbReference>
<dbReference type="ExpressionAtlas" id="Q6UWY0">
    <property type="expression patterns" value="baseline and differential"/>
</dbReference>
<dbReference type="GO" id="GO:0005788">
    <property type="term" value="C:endoplasmic reticulum lumen"/>
    <property type="evidence" value="ECO:0000304"/>
    <property type="project" value="Reactome"/>
</dbReference>
<dbReference type="GO" id="GO:0005576">
    <property type="term" value="C:extracellular region"/>
    <property type="evidence" value="ECO:0000314"/>
    <property type="project" value="UniProtKB"/>
</dbReference>
<dbReference type="GO" id="GO:0005764">
    <property type="term" value="C:lysosome"/>
    <property type="evidence" value="ECO:0000314"/>
    <property type="project" value="UniProtKB"/>
</dbReference>
<dbReference type="GO" id="GO:0004065">
    <property type="term" value="F:arylsulfatase activity"/>
    <property type="evidence" value="ECO:0000315"/>
    <property type="project" value="UniProtKB"/>
</dbReference>
<dbReference type="GO" id="GO:0015024">
    <property type="term" value="F:glucuronate-2-sulfatase activity"/>
    <property type="evidence" value="ECO:0000315"/>
    <property type="project" value="UniProtKB"/>
</dbReference>
<dbReference type="GO" id="GO:0046872">
    <property type="term" value="F:metal ion binding"/>
    <property type="evidence" value="ECO:0007669"/>
    <property type="project" value="UniProtKB-KW"/>
</dbReference>
<dbReference type="CDD" id="cd16171">
    <property type="entry name" value="ARSK"/>
    <property type="match status" value="1"/>
</dbReference>
<dbReference type="FunFam" id="3.40.720.10:FF:000039">
    <property type="entry name" value="arylsulfatase K"/>
    <property type="match status" value="1"/>
</dbReference>
<dbReference type="Gene3D" id="3.40.720.10">
    <property type="entry name" value="Alkaline Phosphatase, subunit A"/>
    <property type="match status" value="1"/>
</dbReference>
<dbReference type="InterPro" id="IPR017850">
    <property type="entry name" value="Alkaline_phosphatase_core_sf"/>
</dbReference>
<dbReference type="InterPro" id="IPR047892">
    <property type="entry name" value="ARSK"/>
</dbReference>
<dbReference type="InterPro" id="IPR051849">
    <property type="entry name" value="GAG-degrading_sulfatase"/>
</dbReference>
<dbReference type="InterPro" id="IPR000917">
    <property type="entry name" value="Sulfatase_N"/>
</dbReference>
<dbReference type="PANTHER" id="PTHR46615">
    <property type="entry name" value="ARYLSULFATASE K"/>
    <property type="match status" value="1"/>
</dbReference>
<dbReference type="PANTHER" id="PTHR46615:SF1">
    <property type="entry name" value="ARYLSULFATASE K"/>
    <property type="match status" value="1"/>
</dbReference>
<dbReference type="Pfam" id="PF00884">
    <property type="entry name" value="Sulfatase"/>
    <property type="match status" value="1"/>
</dbReference>
<dbReference type="SUPFAM" id="SSF53649">
    <property type="entry name" value="Alkaline phosphatase-like"/>
    <property type="match status" value="1"/>
</dbReference>